<protein>
    <recommendedName>
        <fullName>Probable syntaxin-7B</fullName>
    </recommendedName>
</protein>
<accession>Q54X86</accession>
<proteinExistence type="inferred from homology"/>
<comment type="subcellular location">
    <subcellularLocation>
        <location evidence="4">Membrane</location>
        <topology evidence="4">Single-pass membrane protein</topology>
    </subcellularLocation>
</comment>
<comment type="similarity">
    <text evidence="4">Belongs to the syntaxin family.</text>
</comment>
<sequence length="286" mass="32855">MTDRQPLISKNDDIINNLTRFYTELTEFEKIIKDVGTGRDTTTLRSTLHKKKVNLADDLKVIAQQIKQLPSSKLPKFQQEKIVKQFKEASSKFEELLSTSNKKESSHEPIVPSQQQQQQQNNGNSNNNGYNTRGGYNQQQQQQQQQYNDYTNNNNNNNNNEVEQYNRLEQALKSGIEQDEEEYTNRILDERNANARQIARDVAMLKEAMDDIAVMVGEQGEMLEKVDDNVTNADVAVEDAVVELEKAYVYKSSYRKKMIIFVICLLVTLVAVGIFLAIYYGVIKKK</sequence>
<dbReference type="EMBL" id="AAFI02000027">
    <property type="protein sequence ID" value="EAL67866.1"/>
    <property type="molecule type" value="Genomic_DNA"/>
</dbReference>
<dbReference type="RefSeq" id="XP_641842.1">
    <property type="nucleotide sequence ID" value="XM_636750.1"/>
</dbReference>
<dbReference type="SMR" id="Q54X86"/>
<dbReference type="FunCoup" id="Q54X86">
    <property type="interactions" value="574"/>
</dbReference>
<dbReference type="STRING" id="44689.Q54X86"/>
<dbReference type="PaxDb" id="44689-DDB0231543"/>
<dbReference type="EnsemblProtists" id="EAL67866">
    <property type="protein sequence ID" value="EAL67866"/>
    <property type="gene ID" value="DDB_G0279133"/>
</dbReference>
<dbReference type="GeneID" id="8621888"/>
<dbReference type="KEGG" id="ddi:DDB_G0279133"/>
<dbReference type="dictyBase" id="DDB_G0279133">
    <property type="gene designation" value="syn7B"/>
</dbReference>
<dbReference type="VEuPathDB" id="AmoebaDB:DDB_G0279133"/>
<dbReference type="eggNOG" id="KOG0811">
    <property type="taxonomic scope" value="Eukaryota"/>
</dbReference>
<dbReference type="HOGENOM" id="CLU_974627_0_0_1"/>
<dbReference type="InParanoid" id="Q54X86"/>
<dbReference type="OMA" id="PKFQQEK"/>
<dbReference type="PhylomeDB" id="Q54X86"/>
<dbReference type="PRO" id="PR:Q54X86"/>
<dbReference type="Proteomes" id="UP000002195">
    <property type="component" value="Chromosome 3"/>
</dbReference>
<dbReference type="GO" id="GO:0012505">
    <property type="term" value="C:endomembrane system"/>
    <property type="evidence" value="ECO:0000318"/>
    <property type="project" value="GO_Central"/>
</dbReference>
<dbReference type="GO" id="GO:0005768">
    <property type="term" value="C:endosome"/>
    <property type="evidence" value="ECO:0000250"/>
    <property type="project" value="dictyBase"/>
</dbReference>
<dbReference type="GO" id="GO:0000139">
    <property type="term" value="C:Golgi membrane"/>
    <property type="evidence" value="ECO:0000318"/>
    <property type="project" value="GO_Central"/>
</dbReference>
<dbReference type="GO" id="GO:0031201">
    <property type="term" value="C:SNARE complex"/>
    <property type="evidence" value="ECO:0000318"/>
    <property type="project" value="GO_Central"/>
</dbReference>
<dbReference type="GO" id="GO:0005484">
    <property type="term" value="F:SNAP receptor activity"/>
    <property type="evidence" value="ECO:0000318"/>
    <property type="project" value="GO_Central"/>
</dbReference>
<dbReference type="GO" id="GO:0000149">
    <property type="term" value="F:SNARE binding"/>
    <property type="evidence" value="ECO:0000318"/>
    <property type="project" value="GO_Central"/>
</dbReference>
<dbReference type="GO" id="GO:0006888">
    <property type="term" value="P:endoplasmic reticulum to Golgi vesicle-mediated transport"/>
    <property type="evidence" value="ECO:0000318"/>
    <property type="project" value="GO_Central"/>
</dbReference>
<dbReference type="GO" id="GO:0006971">
    <property type="term" value="P:hypotonic response"/>
    <property type="evidence" value="ECO:0007007"/>
    <property type="project" value="dictyBase"/>
</dbReference>
<dbReference type="GO" id="GO:0006886">
    <property type="term" value="P:intracellular protein transport"/>
    <property type="evidence" value="ECO:0000318"/>
    <property type="project" value="GO_Central"/>
</dbReference>
<dbReference type="GO" id="GO:0048278">
    <property type="term" value="P:vesicle docking"/>
    <property type="evidence" value="ECO:0000318"/>
    <property type="project" value="GO_Central"/>
</dbReference>
<dbReference type="GO" id="GO:0006906">
    <property type="term" value="P:vesicle fusion"/>
    <property type="evidence" value="ECO:0000318"/>
    <property type="project" value="GO_Central"/>
</dbReference>
<dbReference type="GO" id="GO:0016192">
    <property type="term" value="P:vesicle-mediated transport"/>
    <property type="evidence" value="ECO:0000250"/>
    <property type="project" value="dictyBase"/>
</dbReference>
<dbReference type="FunFam" id="1.20.5.110:FF:000096">
    <property type="entry name" value="QA-SNARE protein putative"/>
    <property type="match status" value="1"/>
</dbReference>
<dbReference type="Gene3D" id="1.20.5.110">
    <property type="match status" value="1"/>
</dbReference>
<dbReference type="Gene3D" id="1.20.58.70">
    <property type="match status" value="1"/>
</dbReference>
<dbReference type="InterPro" id="IPR010989">
    <property type="entry name" value="SNARE"/>
</dbReference>
<dbReference type="InterPro" id="IPR045242">
    <property type="entry name" value="Syntaxin"/>
</dbReference>
<dbReference type="InterPro" id="IPR006011">
    <property type="entry name" value="Syntaxin_N"/>
</dbReference>
<dbReference type="InterPro" id="IPR000727">
    <property type="entry name" value="T_SNARE_dom"/>
</dbReference>
<dbReference type="PANTHER" id="PTHR19957">
    <property type="entry name" value="SYNTAXIN"/>
    <property type="match status" value="1"/>
</dbReference>
<dbReference type="PANTHER" id="PTHR19957:SF78">
    <property type="entry name" value="SYNTAXIN-7B-RELATED"/>
    <property type="match status" value="1"/>
</dbReference>
<dbReference type="Pfam" id="PF05739">
    <property type="entry name" value="SNARE"/>
    <property type="match status" value="1"/>
</dbReference>
<dbReference type="Pfam" id="PF14523">
    <property type="entry name" value="Syntaxin_2"/>
    <property type="match status" value="1"/>
</dbReference>
<dbReference type="SMART" id="SM00397">
    <property type="entry name" value="t_SNARE"/>
    <property type="match status" value="1"/>
</dbReference>
<dbReference type="SUPFAM" id="SSF47661">
    <property type="entry name" value="t-snare proteins"/>
    <property type="match status" value="1"/>
</dbReference>
<dbReference type="PROSITE" id="PS50192">
    <property type="entry name" value="T_SNARE"/>
    <property type="match status" value="1"/>
</dbReference>
<name>STX7B_DICDI</name>
<feature type="chain" id="PRO_0000320000" description="Probable syntaxin-7B">
    <location>
        <begin position="1"/>
        <end position="286"/>
    </location>
</feature>
<feature type="topological domain" description="Cytoplasmic" evidence="1">
    <location>
        <begin position="1"/>
        <end position="257"/>
    </location>
</feature>
<feature type="transmembrane region" description="Helical; Anchor for type IV membrane protein">
    <location>
        <begin position="258"/>
        <end position="278"/>
    </location>
</feature>
<feature type="topological domain" description="Vesicular" evidence="1">
    <location>
        <begin position="279"/>
        <end position="286"/>
    </location>
</feature>
<feature type="domain" description="t-SNARE coiled-coil homology" evidence="2">
    <location>
        <begin position="185"/>
        <end position="247"/>
    </location>
</feature>
<feature type="region of interest" description="Disordered" evidence="3">
    <location>
        <begin position="97"/>
        <end position="160"/>
    </location>
</feature>
<feature type="compositionally biased region" description="Basic and acidic residues" evidence="3">
    <location>
        <begin position="97"/>
        <end position="107"/>
    </location>
</feature>
<feature type="compositionally biased region" description="Low complexity" evidence="3">
    <location>
        <begin position="114"/>
        <end position="160"/>
    </location>
</feature>
<gene>
    <name type="primary">syn7B</name>
    <name type="ORF">DDB_G0279133</name>
</gene>
<reference key="1">
    <citation type="journal article" date="2005" name="Nature">
        <title>The genome of the social amoeba Dictyostelium discoideum.</title>
        <authorList>
            <person name="Eichinger L."/>
            <person name="Pachebat J.A."/>
            <person name="Gloeckner G."/>
            <person name="Rajandream M.A."/>
            <person name="Sucgang R."/>
            <person name="Berriman M."/>
            <person name="Song J."/>
            <person name="Olsen R."/>
            <person name="Szafranski K."/>
            <person name="Xu Q."/>
            <person name="Tunggal B."/>
            <person name="Kummerfeld S."/>
            <person name="Madera M."/>
            <person name="Konfortov B.A."/>
            <person name="Rivero F."/>
            <person name="Bankier A.T."/>
            <person name="Lehmann R."/>
            <person name="Hamlin N."/>
            <person name="Davies R."/>
            <person name="Gaudet P."/>
            <person name="Fey P."/>
            <person name="Pilcher K."/>
            <person name="Chen G."/>
            <person name="Saunders D."/>
            <person name="Sodergren E.J."/>
            <person name="Davis P."/>
            <person name="Kerhornou A."/>
            <person name="Nie X."/>
            <person name="Hall N."/>
            <person name="Anjard C."/>
            <person name="Hemphill L."/>
            <person name="Bason N."/>
            <person name="Farbrother P."/>
            <person name="Desany B."/>
            <person name="Just E."/>
            <person name="Morio T."/>
            <person name="Rost R."/>
            <person name="Churcher C.M."/>
            <person name="Cooper J."/>
            <person name="Haydock S."/>
            <person name="van Driessche N."/>
            <person name="Cronin A."/>
            <person name="Goodhead I."/>
            <person name="Muzny D.M."/>
            <person name="Mourier T."/>
            <person name="Pain A."/>
            <person name="Lu M."/>
            <person name="Harper D."/>
            <person name="Lindsay R."/>
            <person name="Hauser H."/>
            <person name="James K.D."/>
            <person name="Quiles M."/>
            <person name="Madan Babu M."/>
            <person name="Saito T."/>
            <person name="Buchrieser C."/>
            <person name="Wardroper A."/>
            <person name="Felder M."/>
            <person name="Thangavelu M."/>
            <person name="Johnson D."/>
            <person name="Knights A."/>
            <person name="Loulseged H."/>
            <person name="Mungall K.L."/>
            <person name="Oliver K."/>
            <person name="Price C."/>
            <person name="Quail M.A."/>
            <person name="Urushihara H."/>
            <person name="Hernandez J."/>
            <person name="Rabbinowitsch E."/>
            <person name="Steffen D."/>
            <person name="Sanders M."/>
            <person name="Ma J."/>
            <person name="Kohara Y."/>
            <person name="Sharp S."/>
            <person name="Simmonds M.N."/>
            <person name="Spiegler S."/>
            <person name="Tivey A."/>
            <person name="Sugano S."/>
            <person name="White B."/>
            <person name="Walker D."/>
            <person name="Woodward J.R."/>
            <person name="Winckler T."/>
            <person name="Tanaka Y."/>
            <person name="Shaulsky G."/>
            <person name="Schleicher M."/>
            <person name="Weinstock G.M."/>
            <person name="Rosenthal A."/>
            <person name="Cox E.C."/>
            <person name="Chisholm R.L."/>
            <person name="Gibbs R.A."/>
            <person name="Loomis W.F."/>
            <person name="Platzer M."/>
            <person name="Kay R.R."/>
            <person name="Williams J.G."/>
            <person name="Dear P.H."/>
            <person name="Noegel A.A."/>
            <person name="Barrell B.G."/>
            <person name="Kuspa A."/>
        </authorList>
    </citation>
    <scope>NUCLEOTIDE SEQUENCE [LARGE SCALE GENOMIC DNA]</scope>
    <source>
        <strain>AX4</strain>
    </source>
</reference>
<keyword id="KW-0175">Coiled coil</keyword>
<keyword id="KW-0472">Membrane</keyword>
<keyword id="KW-1185">Reference proteome</keyword>
<keyword id="KW-0812">Transmembrane</keyword>
<keyword id="KW-1133">Transmembrane helix</keyword>
<evidence type="ECO:0000255" key="1"/>
<evidence type="ECO:0000255" key="2">
    <source>
        <dbReference type="PROSITE-ProRule" id="PRU00202"/>
    </source>
</evidence>
<evidence type="ECO:0000256" key="3">
    <source>
        <dbReference type="SAM" id="MobiDB-lite"/>
    </source>
</evidence>
<evidence type="ECO:0000305" key="4"/>
<organism>
    <name type="scientific">Dictyostelium discoideum</name>
    <name type="common">Social amoeba</name>
    <dbReference type="NCBI Taxonomy" id="44689"/>
    <lineage>
        <taxon>Eukaryota</taxon>
        <taxon>Amoebozoa</taxon>
        <taxon>Evosea</taxon>
        <taxon>Eumycetozoa</taxon>
        <taxon>Dictyostelia</taxon>
        <taxon>Dictyosteliales</taxon>
        <taxon>Dictyosteliaceae</taxon>
        <taxon>Dictyostelium</taxon>
    </lineage>
</organism>